<accession>B2I935</accession>
<proteinExistence type="inferred from homology"/>
<protein>
    <recommendedName>
        <fullName evidence="1">CTP synthase</fullName>
        <ecNumber evidence="1">6.3.4.2</ecNumber>
    </recommendedName>
    <alternativeName>
        <fullName evidence="1">Cytidine 5'-triphosphate synthase</fullName>
    </alternativeName>
    <alternativeName>
        <fullName evidence="1">Cytidine triphosphate synthetase</fullName>
        <shortName evidence="1">CTP synthetase</shortName>
        <shortName evidence="1">CTPS</shortName>
    </alternativeName>
    <alternativeName>
        <fullName evidence="1">UTP--ammonia ligase</fullName>
    </alternativeName>
</protein>
<reference key="1">
    <citation type="journal article" date="2010" name="J. Bacteriol.">
        <title>Whole genome sequences of two Xylella fastidiosa strains (M12 and M23) causing almond leaf scorch disease in California.</title>
        <authorList>
            <person name="Chen J."/>
            <person name="Xie G."/>
            <person name="Han S."/>
            <person name="Chertkov O."/>
            <person name="Sims D."/>
            <person name="Civerolo E.L."/>
        </authorList>
    </citation>
    <scope>NUCLEOTIDE SEQUENCE [LARGE SCALE GENOMIC DNA]</scope>
    <source>
        <strain>M23</strain>
    </source>
</reference>
<name>PYRG_XYLF2</name>
<sequence length="554" mass="61564">MTPLIFVTGGVVSSLGKGIAAASLASILEARGLKVTMVKLDPYINVDPGTMSPFQHGEVYVTDDGAETDLDLGHYERFVRTRLSRKNSVTTGRIYQNVICKERRGDYLGATVQVIPHITDEIRRCIDEATASFDVALVEIGGTVGDIESLPFLEAIRQVRIERGAERTMFMHLTLVPYIAAAGELKTKPTQHSVKELRSIGIQPDVLLCRSEQVIPDSERRKIALFTNVSERAVIGCPDIDVLYGMPLELRRQGLDEIVIDQFKLSGTASLADLSEWEDVVDAIKHPLDEVTIAVVGKYVDYQDAYKSVGEALKHGGLRQRTKVNLKWVEAQDLEGSDMAALKDIDGILVPGGFGDRGFEGKVLASRYAREQRVPYFGICYGMQAAVVDYARHVAGLEGANSTENDRQSSHPVIALITEWRTTTGEVERRDEKSDLGGTMRLGLQEQRLKAGTLARELYGRDVVGERHRHRYEFNNRYRTQLEDAGLVIAAKSMDDTLVEMIELPREMHPWFLACQAHPEFLSTPRDGHPLFIGFVKASRARKAGGKLLREVCV</sequence>
<feature type="chain" id="PRO_1000139604" description="CTP synthase">
    <location>
        <begin position="1"/>
        <end position="554"/>
    </location>
</feature>
<feature type="domain" description="Glutamine amidotransferase type-1" evidence="1">
    <location>
        <begin position="292"/>
        <end position="545"/>
    </location>
</feature>
<feature type="region of interest" description="Amidoligase domain" evidence="1">
    <location>
        <begin position="1"/>
        <end position="265"/>
    </location>
</feature>
<feature type="active site" description="Nucleophile; for glutamine hydrolysis" evidence="1">
    <location>
        <position position="380"/>
    </location>
</feature>
<feature type="active site" evidence="1">
    <location>
        <position position="518"/>
    </location>
</feature>
<feature type="active site" evidence="1">
    <location>
        <position position="520"/>
    </location>
</feature>
<feature type="binding site" evidence="1">
    <location>
        <position position="13"/>
    </location>
    <ligand>
        <name>CTP</name>
        <dbReference type="ChEBI" id="CHEBI:37563"/>
        <note>allosteric inhibitor</note>
    </ligand>
</feature>
<feature type="binding site" evidence="1">
    <location>
        <position position="13"/>
    </location>
    <ligand>
        <name>UTP</name>
        <dbReference type="ChEBI" id="CHEBI:46398"/>
    </ligand>
</feature>
<feature type="binding site" evidence="1">
    <location>
        <begin position="14"/>
        <end position="19"/>
    </location>
    <ligand>
        <name>ATP</name>
        <dbReference type="ChEBI" id="CHEBI:30616"/>
    </ligand>
</feature>
<feature type="binding site" evidence="1">
    <location>
        <position position="71"/>
    </location>
    <ligand>
        <name>ATP</name>
        <dbReference type="ChEBI" id="CHEBI:30616"/>
    </ligand>
</feature>
<feature type="binding site" evidence="1">
    <location>
        <position position="71"/>
    </location>
    <ligand>
        <name>Mg(2+)</name>
        <dbReference type="ChEBI" id="CHEBI:18420"/>
    </ligand>
</feature>
<feature type="binding site" evidence="1">
    <location>
        <position position="139"/>
    </location>
    <ligand>
        <name>Mg(2+)</name>
        <dbReference type="ChEBI" id="CHEBI:18420"/>
    </ligand>
</feature>
<feature type="binding site" evidence="1">
    <location>
        <begin position="146"/>
        <end position="148"/>
    </location>
    <ligand>
        <name>CTP</name>
        <dbReference type="ChEBI" id="CHEBI:37563"/>
        <note>allosteric inhibitor</note>
    </ligand>
</feature>
<feature type="binding site" evidence="1">
    <location>
        <begin position="186"/>
        <end position="191"/>
    </location>
    <ligand>
        <name>CTP</name>
        <dbReference type="ChEBI" id="CHEBI:37563"/>
        <note>allosteric inhibitor</note>
    </ligand>
</feature>
<feature type="binding site" evidence="1">
    <location>
        <begin position="186"/>
        <end position="191"/>
    </location>
    <ligand>
        <name>UTP</name>
        <dbReference type="ChEBI" id="CHEBI:46398"/>
    </ligand>
</feature>
<feature type="binding site" evidence="1">
    <location>
        <position position="222"/>
    </location>
    <ligand>
        <name>CTP</name>
        <dbReference type="ChEBI" id="CHEBI:37563"/>
        <note>allosteric inhibitor</note>
    </ligand>
</feature>
<feature type="binding site" evidence="1">
    <location>
        <position position="222"/>
    </location>
    <ligand>
        <name>UTP</name>
        <dbReference type="ChEBI" id="CHEBI:46398"/>
    </ligand>
</feature>
<feature type="binding site" evidence="1">
    <location>
        <position position="353"/>
    </location>
    <ligand>
        <name>L-glutamine</name>
        <dbReference type="ChEBI" id="CHEBI:58359"/>
    </ligand>
</feature>
<feature type="binding site" evidence="1">
    <location>
        <begin position="381"/>
        <end position="384"/>
    </location>
    <ligand>
        <name>L-glutamine</name>
        <dbReference type="ChEBI" id="CHEBI:58359"/>
    </ligand>
</feature>
<feature type="binding site" evidence="1">
    <location>
        <position position="404"/>
    </location>
    <ligand>
        <name>L-glutamine</name>
        <dbReference type="ChEBI" id="CHEBI:58359"/>
    </ligand>
</feature>
<feature type="binding site" evidence="1">
    <location>
        <position position="471"/>
    </location>
    <ligand>
        <name>L-glutamine</name>
        <dbReference type="ChEBI" id="CHEBI:58359"/>
    </ligand>
</feature>
<gene>
    <name evidence="1" type="primary">pyrG</name>
    <name type="ordered locus">XfasM23_0566</name>
</gene>
<evidence type="ECO:0000255" key="1">
    <source>
        <dbReference type="HAMAP-Rule" id="MF_01227"/>
    </source>
</evidence>
<keyword id="KW-0067">ATP-binding</keyword>
<keyword id="KW-0315">Glutamine amidotransferase</keyword>
<keyword id="KW-0436">Ligase</keyword>
<keyword id="KW-0460">Magnesium</keyword>
<keyword id="KW-0479">Metal-binding</keyword>
<keyword id="KW-0547">Nucleotide-binding</keyword>
<keyword id="KW-0665">Pyrimidine biosynthesis</keyword>
<comment type="function">
    <text evidence="1">Catalyzes the ATP-dependent amination of UTP to CTP with either L-glutamine or ammonia as the source of nitrogen. Regulates intracellular CTP levels through interactions with the four ribonucleotide triphosphates.</text>
</comment>
<comment type="catalytic activity">
    <reaction evidence="1">
        <text>UTP + L-glutamine + ATP + H2O = CTP + L-glutamate + ADP + phosphate + 2 H(+)</text>
        <dbReference type="Rhea" id="RHEA:26426"/>
        <dbReference type="ChEBI" id="CHEBI:15377"/>
        <dbReference type="ChEBI" id="CHEBI:15378"/>
        <dbReference type="ChEBI" id="CHEBI:29985"/>
        <dbReference type="ChEBI" id="CHEBI:30616"/>
        <dbReference type="ChEBI" id="CHEBI:37563"/>
        <dbReference type="ChEBI" id="CHEBI:43474"/>
        <dbReference type="ChEBI" id="CHEBI:46398"/>
        <dbReference type="ChEBI" id="CHEBI:58359"/>
        <dbReference type="ChEBI" id="CHEBI:456216"/>
        <dbReference type="EC" id="6.3.4.2"/>
    </reaction>
</comment>
<comment type="catalytic activity">
    <reaction evidence="1">
        <text>L-glutamine + H2O = L-glutamate + NH4(+)</text>
        <dbReference type="Rhea" id="RHEA:15889"/>
        <dbReference type="ChEBI" id="CHEBI:15377"/>
        <dbReference type="ChEBI" id="CHEBI:28938"/>
        <dbReference type="ChEBI" id="CHEBI:29985"/>
        <dbReference type="ChEBI" id="CHEBI:58359"/>
    </reaction>
</comment>
<comment type="catalytic activity">
    <reaction evidence="1">
        <text>UTP + NH4(+) + ATP = CTP + ADP + phosphate + 2 H(+)</text>
        <dbReference type="Rhea" id="RHEA:16597"/>
        <dbReference type="ChEBI" id="CHEBI:15378"/>
        <dbReference type="ChEBI" id="CHEBI:28938"/>
        <dbReference type="ChEBI" id="CHEBI:30616"/>
        <dbReference type="ChEBI" id="CHEBI:37563"/>
        <dbReference type="ChEBI" id="CHEBI:43474"/>
        <dbReference type="ChEBI" id="CHEBI:46398"/>
        <dbReference type="ChEBI" id="CHEBI:456216"/>
    </reaction>
</comment>
<comment type="activity regulation">
    <text evidence="1">Allosterically activated by GTP, when glutamine is the substrate; GTP has no effect on the reaction when ammonia is the substrate. The allosteric effector GTP functions by stabilizing the protein conformation that binds the tetrahedral intermediate(s) formed during glutamine hydrolysis. Inhibited by the product CTP, via allosteric rather than competitive inhibition.</text>
</comment>
<comment type="pathway">
    <text evidence="1">Pyrimidine metabolism; CTP biosynthesis via de novo pathway; CTP from UDP: step 2/2.</text>
</comment>
<comment type="subunit">
    <text evidence="1">Homotetramer.</text>
</comment>
<comment type="miscellaneous">
    <text evidence="1">CTPSs have evolved a hybrid strategy for distinguishing between UTP and CTP. The overlapping regions of the product feedback inhibitory and substrate sites recognize a common feature in both compounds, the triphosphate moiety. To differentiate isosteric substrate and product pyrimidine rings, an additional pocket far from the expected kinase/ligase catalytic site, specifically recognizes the cytosine and ribose portions of the product inhibitor.</text>
</comment>
<comment type="similarity">
    <text evidence="1">Belongs to the CTP synthase family.</text>
</comment>
<dbReference type="EC" id="6.3.4.2" evidence="1"/>
<dbReference type="EMBL" id="CP001011">
    <property type="protein sequence ID" value="ACB92010.1"/>
    <property type="molecule type" value="Genomic_DNA"/>
</dbReference>
<dbReference type="RefSeq" id="WP_004090560.1">
    <property type="nucleotide sequence ID" value="NC_010577.1"/>
</dbReference>
<dbReference type="SMR" id="B2I935"/>
<dbReference type="MEROPS" id="C26.964"/>
<dbReference type="KEGG" id="xfn:XfasM23_0566"/>
<dbReference type="HOGENOM" id="CLU_011675_5_0_6"/>
<dbReference type="UniPathway" id="UPA00159">
    <property type="reaction ID" value="UER00277"/>
</dbReference>
<dbReference type="Proteomes" id="UP000001698">
    <property type="component" value="Chromosome"/>
</dbReference>
<dbReference type="GO" id="GO:0005829">
    <property type="term" value="C:cytosol"/>
    <property type="evidence" value="ECO:0007669"/>
    <property type="project" value="TreeGrafter"/>
</dbReference>
<dbReference type="GO" id="GO:0005524">
    <property type="term" value="F:ATP binding"/>
    <property type="evidence" value="ECO:0007669"/>
    <property type="project" value="UniProtKB-KW"/>
</dbReference>
<dbReference type="GO" id="GO:0003883">
    <property type="term" value="F:CTP synthase activity"/>
    <property type="evidence" value="ECO:0007669"/>
    <property type="project" value="UniProtKB-UniRule"/>
</dbReference>
<dbReference type="GO" id="GO:0004359">
    <property type="term" value="F:glutaminase activity"/>
    <property type="evidence" value="ECO:0007669"/>
    <property type="project" value="RHEA"/>
</dbReference>
<dbReference type="GO" id="GO:0042802">
    <property type="term" value="F:identical protein binding"/>
    <property type="evidence" value="ECO:0007669"/>
    <property type="project" value="TreeGrafter"/>
</dbReference>
<dbReference type="GO" id="GO:0046872">
    <property type="term" value="F:metal ion binding"/>
    <property type="evidence" value="ECO:0007669"/>
    <property type="project" value="UniProtKB-KW"/>
</dbReference>
<dbReference type="GO" id="GO:0044210">
    <property type="term" value="P:'de novo' CTP biosynthetic process"/>
    <property type="evidence" value="ECO:0007669"/>
    <property type="project" value="UniProtKB-UniRule"/>
</dbReference>
<dbReference type="GO" id="GO:0019856">
    <property type="term" value="P:pyrimidine nucleobase biosynthetic process"/>
    <property type="evidence" value="ECO:0007669"/>
    <property type="project" value="TreeGrafter"/>
</dbReference>
<dbReference type="CDD" id="cd03113">
    <property type="entry name" value="CTPS_N"/>
    <property type="match status" value="1"/>
</dbReference>
<dbReference type="CDD" id="cd01746">
    <property type="entry name" value="GATase1_CTP_Synthase"/>
    <property type="match status" value="1"/>
</dbReference>
<dbReference type="FunFam" id="3.40.50.300:FF:000009">
    <property type="entry name" value="CTP synthase"/>
    <property type="match status" value="1"/>
</dbReference>
<dbReference type="FunFam" id="3.40.50.880:FF:000002">
    <property type="entry name" value="CTP synthase"/>
    <property type="match status" value="1"/>
</dbReference>
<dbReference type="Gene3D" id="3.40.50.880">
    <property type="match status" value="1"/>
</dbReference>
<dbReference type="Gene3D" id="3.40.50.300">
    <property type="entry name" value="P-loop containing nucleotide triphosphate hydrolases"/>
    <property type="match status" value="1"/>
</dbReference>
<dbReference type="HAMAP" id="MF_01227">
    <property type="entry name" value="PyrG"/>
    <property type="match status" value="1"/>
</dbReference>
<dbReference type="InterPro" id="IPR029062">
    <property type="entry name" value="Class_I_gatase-like"/>
</dbReference>
<dbReference type="InterPro" id="IPR004468">
    <property type="entry name" value="CTP_synthase"/>
</dbReference>
<dbReference type="InterPro" id="IPR017456">
    <property type="entry name" value="CTP_synthase_N"/>
</dbReference>
<dbReference type="InterPro" id="IPR017926">
    <property type="entry name" value="GATASE"/>
</dbReference>
<dbReference type="InterPro" id="IPR033828">
    <property type="entry name" value="GATase1_CTP_Synthase"/>
</dbReference>
<dbReference type="InterPro" id="IPR027417">
    <property type="entry name" value="P-loop_NTPase"/>
</dbReference>
<dbReference type="NCBIfam" id="NF003792">
    <property type="entry name" value="PRK05380.1"/>
    <property type="match status" value="1"/>
</dbReference>
<dbReference type="NCBIfam" id="TIGR00337">
    <property type="entry name" value="PyrG"/>
    <property type="match status" value="1"/>
</dbReference>
<dbReference type="PANTHER" id="PTHR11550">
    <property type="entry name" value="CTP SYNTHASE"/>
    <property type="match status" value="1"/>
</dbReference>
<dbReference type="PANTHER" id="PTHR11550:SF0">
    <property type="entry name" value="CTP SYNTHASE-RELATED"/>
    <property type="match status" value="1"/>
</dbReference>
<dbReference type="Pfam" id="PF06418">
    <property type="entry name" value="CTP_synth_N"/>
    <property type="match status" value="1"/>
</dbReference>
<dbReference type="Pfam" id="PF00117">
    <property type="entry name" value="GATase"/>
    <property type="match status" value="1"/>
</dbReference>
<dbReference type="SUPFAM" id="SSF52317">
    <property type="entry name" value="Class I glutamine amidotransferase-like"/>
    <property type="match status" value="1"/>
</dbReference>
<dbReference type="SUPFAM" id="SSF52540">
    <property type="entry name" value="P-loop containing nucleoside triphosphate hydrolases"/>
    <property type="match status" value="1"/>
</dbReference>
<dbReference type="PROSITE" id="PS51273">
    <property type="entry name" value="GATASE_TYPE_1"/>
    <property type="match status" value="1"/>
</dbReference>
<organism>
    <name type="scientific">Xylella fastidiosa (strain M23)</name>
    <dbReference type="NCBI Taxonomy" id="405441"/>
    <lineage>
        <taxon>Bacteria</taxon>
        <taxon>Pseudomonadati</taxon>
        <taxon>Pseudomonadota</taxon>
        <taxon>Gammaproteobacteria</taxon>
        <taxon>Lysobacterales</taxon>
        <taxon>Lysobacteraceae</taxon>
        <taxon>Xylella</taxon>
    </lineage>
</organism>